<sequence>MANVRPSVVFKQQEVNHMADILKNSKSFIVFEYHGLTAANILALRNVLHSSNSKLYVLKNNITARAFEKAGVSGFENQLTGPNAVAVAMDDEIAAIKAVNDVAKEFDFVKIKGAYLENKFADTHKIDQLAAIPGREGLYSMLLSCFTAPLRNVMYGLKAVAEQKGE</sequence>
<dbReference type="EMBL" id="CP000942">
    <property type="protein sequence ID" value="ACA33101.1"/>
    <property type="molecule type" value="Genomic_DNA"/>
</dbReference>
<dbReference type="RefSeq" id="WP_006688636.1">
    <property type="nucleotide sequence ID" value="NC_010503.1"/>
</dbReference>
<dbReference type="SMR" id="B1AHZ6"/>
<dbReference type="GeneID" id="29672245"/>
<dbReference type="KEGG" id="upa:UPA3_0010"/>
<dbReference type="HOGENOM" id="CLU_092227_2_0_14"/>
<dbReference type="Proteomes" id="UP000002162">
    <property type="component" value="Chromosome"/>
</dbReference>
<dbReference type="GO" id="GO:0015934">
    <property type="term" value="C:large ribosomal subunit"/>
    <property type="evidence" value="ECO:0007669"/>
    <property type="project" value="InterPro"/>
</dbReference>
<dbReference type="GO" id="GO:0070180">
    <property type="term" value="F:large ribosomal subunit rRNA binding"/>
    <property type="evidence" value="ECO:0007669"/>
    <property type="project" value="UniProtKB-UniRule"/>
</dbReference>
<dbReference type="GO" id="GO:0003735">
    <property type="term" value="F:structural constituent of ribosome"/>
    <property type="evidence" value="ECO:0007669"/>
    <property type="project" value="InterPro"/>
</dbReference>
<dbReference type="GO" id="GO:0006412">
    <property type="term" value="P:translation"/>
    <property type="evidence" value="ECO:0007669"/>
    <property type="project" value="UniProtKB-UniRule"/>
</dbReference>
<dbReference type="CDD" id="cd05797">
    <property type="entry name" value="Ribosomal_L10"/>
    <property type="match status" value="1"/>
</dbReference>
<dbReference type="Gene3D" id="3.30.70.1730">
    <property type="match status" value="1"/>
</dbReference>
<dbReference type="HAMAP" id="MF_00362">
    <property type="entry name" value="Ribosomal_uL10"/>
    <property type="match status" value="1"/>
</dbReference>
<dbReference type="InterPro" id="IPR001790">
    <property type="entry name" value="Ribosomal_uL10"/>
</dbReference>
<dbReference type="InterPro" id="IPR043141">
    <property type="entry name" value="Ribosomal_uL10-like_sf"/>
</dbReference>
<dbReference type="InterPro" id="IPR022973">
    <property type="entry name" value="Ribosomal_uL10_bac"/>
</dbReference>
<dbReference type="InterPro" id="IPR047865">
    <property type="entry name" value="Ribosomal_uL10_bac_type"/>
</dbReference>
<dbReference type="InterPro" id="IPR002363">
    <property type="entry name" value="Ribosomal_uL10_CS_bac"/>
</dbReference>
<dbReference type="NCBIfam" id="NF000955">
    <property type="entry name" value="PRK00099.1-1"/>
    <property type="match status" value="1"/>
</dbReference>
<dbReference type="PANTHER" id="PTHR11560">
    <property type="entry name" value="39S RIBOSOMAL PROTEIN L10, MITOCHONDRIAL"/>
    <property type="match status" value="1"/>
</dbReference>
<dbReference type="Pfam" id="PF00466">
    <property type="entry name" value="Ribosomal_L10"/>
    <property type="match status" value="1"/>
</dbReference>
<dbReference type="SUPFAM" id="SSF160369">
    <property type="entry name" value="Ribosomal protein L10-like"/>
    <property type="match status" value="1"/>
</dbReference>
<dbReference type="PROSITE" id="PS01109">
    <property type="entry name" value="RIBOSOMAL_L10"/>
    <property type="match status" value="1"/>
</dbReference>
<evidence type="ECO:0000255" key="1">
    <source>
        <dbReference type="HAMAP-Rule" id="MF_00362"/>
    </source>
</evidence>
<evidence type="ECO:0000305" key="2"/>
<accession>B1AHZ6</accession>
<feature type="chain" id="PRO_1000079569" description="Large ribosomal subunit protein uL10">
    <location>
        <begin position="1"/>
        <end position="166"/>
    </location>
</feature>
<gene>
    <name evidence="1" type="primary">rplJ</name>
    <name type="ordered locus">UPA3_0010</name>
</gene>
<reference key="1">
    <citation type="submission" date="2008-02" db="EMBL/GenBank/DDBJ databases">
        <title>Genome sequence of Ureaplasma parvum serovar 3.</title>
        <authorList>
            <person name="Methe B.A."/>
            <person name="Glass J."/>
            <person name="Waites K."/>
            <person name="Shrivastava S."/>
        </authorList>
    </citation>
    <scope>NUCLEOTIDE SEQUENCE [LARGE SCALE GENOMIC DNA]</scope>
    <source>
        <strain>ATCC 27815 / 27 / NCTC 11736</strain>
    </source>
</reference>
<protein>
    <recommendedName>
        <fullName evidence="1">Large ribosomal subunit protein uL10</fullName>
    </recommendedName>
    <alternativeName>
        <fullName evidence="2">50S ribosomal protein L10</fullName>
    </alternativeName>
</protein>
<comment type="function">
    <text evidence="1">Forms part of the ribosomal stalk, playing a central role in the interaction of the ribosome with GTP-bound translation factors.</text>
</comment>
<comment type="subunit">
    <text evidence="1">Part of the ribosomal stalk of the 50S ribosomal subunit. The N-terminus interacts with L11 and the large rRNA to form the base of the stalk. The C-terminus forms an elongated spine to which L12 dimers bind in a sequential fashion forming a multimeric L10(L12)X complex.</text>
</comment>
<comment type="similarity">
    <text evidence="1">Belongs to the universal ribosomal protein uL10 family.</text>
</comment>
<organism>
    <name type="scientific">Ureaplasma parvum serovar 3 (strain ATCC 27815 / 27 / NCTC 11736)</name>
    <dbReference type="NCBI Taxonomy" id="505682"/>
    <lineage>
        <taxon>Bacteria</taxon>
        <taxon>Bacillati</taxon>
        <taxon>Mycoplasmatota</taxon>
        <taxon>Mycoplasmoidales</taxon>
        <taxon>Mycoplasmoidaceae</taxon>
        <taxon>Ureaplasma</taxon>
    </lineage>
</organism>
<proteinExistence type="inferred from homology"/>
<keyword id="KW-0687">Ribonucleoprotein</keyword>
<keyword id="KW-0689">Ribosomal protein</keyword>
<keyword id="KW-0694">RNA-binding</keyword>
<keyword id="KW-0699">rRNA-binding</keyword>
<name>RL10_UREP2</name>